<comment type="function">
    <text evidence="3 4 6 11">Part of the ammonia monooxygenase complex, which catalyzes the oxidation of ammonia to hydroxylamine, the first reaction in the process of ammonia oxidation to nitrite.</text>
</comment>
<comment type="catalytic activity">
    <reaction evidence="4 12">
        <text>AH2 + NH4(+) + O2 = hydroxylamine + A + H2O + H(+)</text>
        <dbReference type="Rhea" id="RHEA:27341"/>
        <dbReference type="ChEBI" id="CHEBI:13193"/>
        <dbReference type="ChEBI" id="CHEBI:15377"/>
        <dbReference type="ChEBI" id="CHEBI:15378"/>
        <dbReference type="ChEBI" id="CHEBI:15379"/>
        <dbReference type="ChEBI" id="CHEBI:15429"/>
        <dbReference type="ChEBI" id="CHEBI:17499"/>
        <dbReference type="ChEBI" id="CHEBI:28938"/>
        <dbReference type="EC" id="1.14.99.39"/>
    </reaction>
</comment>
<comment type="cofactor">
    <cofactor evidence="4 5 11">
        <name>Cu(2+)</name>
        <dbReference type="ChEBI" id="CHEBI:29036"/>
    </cofactor>
    <text evidence="1 4 5">Binds 2 copper ions per subunit (PubMed:19453274, PubMed:20204476). The two coppers forms a binuclear cluster (By similarity).</text>
</comment>
<comment type="activity regulation">
    <text evidence="4">In vitro, inhibited by acetylene.</text>
</comment>
<comment type="biophysicochemical properties">
    <kinetics>
        <text evidence="6">kcat is 20 sec(-1) for ammonia as substrate.</text>
    </kinetics>
</comment>
<comment type="subunit">
    <text evidence="4">The soluble ammonia monooxygenase is a nonamer composed of three alpha subunits (AmoA), three beta subunits (AmoB) and three gamma subunits (Cytochrome c1 PetC).</text>
</comment>
<comment type="subcellular location">
    <subcellularLocation>
        <location evidence="4">Cell membrane</location>
        <topology evidence="12">Multi-pass membrane protein</topology>
    </subcellularLocation>
    <subcellularLocation>
        <location evidence="4">Cytoplasm</location>
    </subcellularLocation>
    <text evidence="4">Ammonia monooxygenase is active and distributed approximately equally in both subcellular fractions.</text>
</comment>
<comment type="disruption phenotype">
    <text evidence="3">Cells lacking amoB1 grow more slowly than wild-type cells, while cells lacking amoB2 grow at rates similar to wild-type.</text>
</comment>
<comment type="miscellaneous">
    <text evidence="9">The physiological significance of the two gene copies is still unknown.</text>
</comment>
<organism>
    <name type="scientific">Nitrosomonas europaea (strain ATCC 19718 / CIP 103999 / KCTC 2705 / NBRC 14298)</name>
    <dbReference type="NCBI Taxonomy" id="228410"/>
    <lineage>
        <taxon>Bacteria</taxon>
        <taxon>Pseudomonadati</taxon>
        <taxon>Pseudomonadota</taxon>
        <taxon>Betaproteobacteria</taxon>
        <taxon>Nitrosomonadales</taxon>
        <taxon>Nitrosomonadaceae</taxon>
        <taxon>Nitrosomonas</taxon>
    </lineage>
</organism>
<name>AMOB_NITEU</name>
<sequence>MGIKNLYKRGVMGLYGVAYAVAALAMTVTLDVSTVAAHGERSQEPFLRMRTVQWYDIKWGPEVTKVNENAKITGKFHLAEDWPRAAAQPDFSFFNVGSPSPVFVRLSTKINGHPWFISGPLQIGRDYEFEVNLRARIPGRHHMHAMLNVKDAGPIAGPGAWMNITGSWDDFTNPLKLLTGETIDSETFNLSNGIFWHVVWMSIGIFWIGVFTARPMFLPRSRVLLAYGDDLLMDPMDKKITWVLAILTLALVWGGYRYTENKHPYTVPIQAGQSKVAALPVAPNPVSIVITDANYDVPGRALRVTMEVTNNGDIPVTFGEFTTAGIRFINSTGRKYLDPQYPRELIAVGLNFDDESAIQPGQTKELKMEAKDALWEIQRLMALLGDPESRFGGLLMSWDAEGNRHINSIAGPVIPVFTKL</sequence>
<gene>
    <name evidence="8" type="primary">amoB1</name>
    <name evidence="8" type="synonym">amoB</name>
    <name type="ordered locus">NE0943</name>
</gene>
<gene>
    <name evidence="8" type="primary">amoB2</name>
    <name evidence="8" type="synonym">amoB</name>
    <name type="ordered locus">NE2062</name>
</gene>
<proteinExistence type="evidence at protein level"/>
<reference key="1">
    <citation type="journal article" date="2003" name="J. Bacteriol.">
        <title>Complete genome sequence of the ammonia-oxidizing bacterium and obligate chemolithoautotroph Nitrosomonas europaea.</title>
        <authorList>
            <person name="Chain P."/>
            <person name="Lamerdin J.E."/>
            <person name="Larimer F.W."/>
            <person name="Regala W."/>
            <person name="Lao V."/>
            <person name="Land M.L."/>
            <person name="Hauser L."/>
            <person name="Hooper A.B."/>
            <person name="Klotz M.G."/>
            <person name="Norton J."/>
            <person name="Sayavedra-Soto L.A."/>
            <person name="Arciero D.M."/>
            <person name="Hommes N.G."/>
            <person name="Whittaker M.M."/>
            <person name="Arp D.J."/>
        </authorList>
    </citation>
    <scope>NUCLEOTIDE SEQUENCE [LARGE SCALE GENOMIC DNA]</scope>
    <source>
        <strain>ATCC 19718 / CIP 103999 / KCTC 2705 / NBRC 14298</strain>
    </source>
</reference>
<reference key="2">
    <citation type="journal article" date="1993" name="J. Bacteriol.">
        <title>Sequence of the gene coding for ammonia monooxygenase in Nitrosomonas europaea.</title>
        <authorList>
            <person name="McTavish H.E."/>
            <person name="Fuchs J.A."/>
            <person name="Hooper A.B."/>
        </authorList>
    </citation>
    <scope>NUCLEOTIDE SEQUENCE [GENOMIC DNA] OF 1-267</scope>
    <scope>PARTIAL PROTEIN SEQUENCE</scope>
    <scope>FUNCTION</scope>
    <scope>CATALYTIC ACTIVITY</scope>
    <scope>BIOPHYSICOCHEMICAL PROPERTIES</scope>
    <scope>SUBCELLULAR LOCATION</scope>
    <source>
        <strain>ATCC 19718 / CIP 103999 / KCTC 2705 / NBRC 14298</strain>
    </source>
</reference>
<reference key="3">
    <citation type="journal article" date="1994" name="Biochem. Biophys. Res. Commun.">
        <title>Sequence of the gene, amoB, for the 43-kDa polypeptide of ammonia monooxygenase of Nitrosomonas europaea.</title>
        <authorList>
            <person name="Bergmann D.J."/>
            <person name="Hooper A.B."/>
        </authorList>
    </citation>
    <scope>NUCLEOTIDE SEQUENCE [GENOMIC DNA] OF 233-420</scope>
    <source>
        <strain>ATCC 19718 / CIP 103999 / KCTC 2705 / NBRC 14298</strain>
    </source>
</reference>
<reference key="4">
    <citation type="journal article" date="2009" name="Biol. Chem.">
        <title>A soluble form of ammonia monooxygenase in Nitrosomonas europaea.</title>
        <authorList>
            <person name="Gilch S."/>
            <person name="Meyer O."/>
            <person name="Schmidt I."/>
        </authorList>
    </citation>
    <scope>PROTEIN SEQUENCE OF 26-35</scope>
    <scope>FUNCTION</scope>
    <scope>CATALYTIC ACTIVITY</scope>
    <scope>ACTIVITY REGULATION</scope>
    <scope>COFACTOR</scope>
    <scope>SUBCELLULAR LOCATION</scope>
    <scope>SUBUNIT</scope>
    <scope>IDENTIFICATION BY MASS SPECTROMETRY</scope>
    <source>
        <strain>ATCC 19718 / CIP 103999 / KCTC 2705 / NBRC 14298</strain>
    </source>
</reference>
<reference key="5">
    <citation type="journal article" date="1993" name="J. Bacteriol.">
        <title>In vitro activation of ammonia monooxygenase from Nitrosomonas europaea by copper.</title>
        <authorList>
            <person name="Ensign S.A."/>
            <person name="Hyman M.R."/>
            <person name="Arp D.J."/>
        </authorList>
    </citation>
    <scope>FUNCTION</scope>
    <scope>COFACTOR</scope>
</reference>
<reference key="6">
    <citation type="journal article" date="2000" name="FEMS Microbiol. Lett.">
        <title>Differential regulation of amoA and amoB gene copies in Nitrosomonas europaea.</title>
        <authorList>
            <person name="Stein L.Y."/>
            <person name="Sayavedra-Soto L.A."/>
            <person name="Hommes N.G."/>
            <person name="Arp D.J."/>
        </authorList>
    </citation>
    <scope>FUNCTION</scope>
    <scope>DISRUPTION PHENOTYPE</scope>
</reference>
<reference key="7">
    <citation type="journal article" date="2010" name="BioMetals">
        <title>Electron paramagnetic studies of the copper and iron containing soluble ammonia monooxygenase from Nitrosomonas europaea.</title>
        <authorList>
            <person name="Gilch S."/>
            <person name="Meyer O."/>
            <person name="Schmidt I."/>
        </authorList>
    </citation>
    <scope>COFACTOR</scope>
    <source>
        <strain>ATCC 19718 / CIP 103999 / KCTC 2705 / NBRC 14298</strain>
    </source>
</reference>
<feature type="signal peptide" evidence="4">
    <location>
        <begin position="1"/>
        <end position="25"/>
    </location>
</feature>
<feature type="chain" id="PRO_0000064590" description="Ammonia monooxygenase beta subunit">
    <location>
        <begin position="26"/>
        <end position="420"/>
    </location>
</feature>
<feature type="transmembrane region" description="Helical" evidence="2">
    <location>
        <begin position="193"/>
        <end position="213"/>
    </location>
</feature>
<feature type="transmembrane region" description="Helical" evidence="2">
    <location>
        <begin position="240"/>
        <end position="260"/>
    </location>
</feature>
<feature type="binding site" evidence="1 10">
    <location>
        <position position="38"/>
    </location>
    <ligand>
        <name>Cu cation</name>
        <dbReference type="ChEBI" id="CHEBI:23378"/>
        <label>1</label>
    </ligand>
</feature>
<feature type="binding site" evidence="1 10">
    <location>
        <position position="142"/>
    </location>
    <ligand>
        <name>Cu cation</name>
        <dbReference type="ChEBI" id="CHEBI:23378"/>
        <label>2</label>
    </ligand>
</feature>
<feature type="binding site" evidence="1 10">
    <location>
        <position position="144"/>
    </location>
    <ligand>
        <name>Cu cation</name>
        <dbReference type="ChEBI" id="CHEBI:23378"/>
        <label>1</label>
    </ligand>
</feature>
<feature type="binding site" evidence="1 10">
    <location>
        <position position="144"/>
    </location>
    <ligand>
        <name>Cu cation</name>
        <dbReference type="ChEBI" id="CHEBI:23378"/>
        <label>2</label>
    </ligand>
</feature>
<accession>Q04508</accession>
<dbReference type="EC" id="1.14.99.39" evidence="4 12"/>
<dbReference type="EMBL" id="AL954747">
    <property type="protein sequence ID" value="CAD84854.1"/>
    <property type="molecule type" value="Genomic_DNA"/>
</dbReference>
<dbReference type="EMBL" id="AL954747">
    <property type="protein sequence ID" value="CAD85973.1"/>
    <property type="molecule type" value="Genomic_DNA"/>
</dbReference>
<dbReference type="EMBL" id="L08050">
    <property type="protein sequence ID" value="AAA66195.1"/>
    <property type="molecule type" value="Genomic_DNA"/>
</dbReference>
<dbReference type="PIR" id="B49853">
    <property type="entry name" value="B49853"/>
</dbReference>
<dbReference type="RefSeq" id="WP_011111552.1">
    <property type="nucleotide sequence ID" value="NC_004757.1"/>
</dbReference>
<dbReference type="PDB" id="9CL6">
    <property type="method" value="EM"/>
    <property type="resolution" value="2.77 A"/>
    <property type="chains" value="A/E/H=38-420"/>
</dbReference>
<dbReference type="PDBsum" id="9CL6"/>
<dbReference type="EMDB" id="EMD-45663"/>
<dbReference type="SMR" id="Q04508"/>
<dbReference type="STRING" id="228410.NE0943"/>
<dbReference type="GeneID" id="87105201"/>
<dbReference type="KEGG" id="neu:NE0943"/>
<dbReference type="KEGG" id="neu:NE2062"/>
<dbReference type="eggNOG" id="ENOG502Z96N">
    <property type="taxonomic scope" value="Bacteria"/>
</dbReference>
<dbReference type="HOGENOM" id="CLU_660275_0_0_4"/>
<dbReference type="OrthoDB" id="178549at2"/>
<dbReference type="BioCyc" id="MetaCyc:MONOMER-3761"/>
<dbReference type="BRENDA" id="1.14.99.39">
    <property type="organism ID" value="3654"/>
</dbReference>
<dbReference type="Proteomes" id="UP000001416">
    <property type="component" value="Chromosome"/>
</dbReference>
<dbReference type="GO" id="GO:0005737">
    <property type="term" value="C:cytoplasm"/>
    <property type="evidence" value="ECO:0007669"/>
    <property type="project" value="UniProtKB-SubCell"/>
</dbReference>
<dbReference type="GO" id="GO:0005886">
    <property type="term" value="C:plasma membrane"/>
    <property type="evidence" value="ECO:0007669"/>
    <property type="project" value="UniProtKB-SubCell"/>
</dbReference>
<dbReference type="GO" id="GO:0018597">
    <property type="term" value="F:ammonia monooxygenase activity"/>
    <property type="evidence" value="ECO:0007669"/>
    <property type="project" value="UniProtKB-EC"/>
</dbReference>
<dbReference type="GO" id="GO:0046872">
    <property type="term" value="F:metal ion binding"/>
    <property type="evidence" value="ECO:0007669"/>
    <property type="project" value="UniProtKB-KW"/>
</dbReference>
<dbReference type="Gene3D" id="1.10.287.710">
    <property type="entry name" value="Helix hairpin bin"/>
    <property type="match status" value="1"/>
</dbReference>
<dbReference type="Gene3D" id="2.60.120.570">
    <property type="entry name" value="Particulate methane monooxygenase, b subunit. Chain: A, domain 1"/>
    <property type="match status" value="1"/>
</dbReference>
<dbReference type="Gene3D" id="2.60.40.1580">
    <property type="entry name" value="Particulate methane monooxygenase, b subunit. Chain: A, domain 3"/>
    <property type="match status" value="1"/>
</dbReference>
<dbReference type="InterPro" id="IPR006833">
    <property type="entry name" value="NH3_CH4_mOase_B"/>
</dbReference>
<dbReference type="InterPro" id="IPR023303">
    <property type="entry name" value="NH3_CH4_mOase_suB_C"/>
</dbReference>
<dbReference type="InterPro" id="IPR023141">
    <property type="entry name" value="NH3_CH4_mOase_suB_hlx_hairpin"/>
</dbReference>
<dbReference type="InterPro" id="IPR023301">
    <property type="entry name" value="NH3_CH4_mOase_suB_N"/>
</dbReference>
<dbReference type="NCBIfam" id="NF041640">
    <property type="entry name" value="AmoB_BACT"/>
    <property type="match status" value="1"/>
</dbReference>
<dbReference type="NCBIfam" id="TIGR03079">
    <property type="entry name" value="CH4_NH3mon_ox_B"/>
    <property type="match status" value="1"/>
</dbReference>
<dbReference type="Pfam" id="PF04744">
    <property type="entry name" value="Monooxygenase_B"/>
    <property type="match status" value="1"/>
</dbReference>
<evidence type="ECO:0000250" key="1">
    <source>
        <dbReference type="UniProtKB" id="G1UBD1"/>
    </source>
</evidence>
<evidence type="ECO:0000255" key="2"/>
<evidence type="ECO:0000269" key="3">
    <source>
    </source>
</evidence>
<evidence type="ECO:0000269" key="4">
    <source>
    </source>
</evidence>
<evidence type="ECO:0000269" key="5">
    <source>
    </source>
</evidence>
<evidence type="ECO:0000269" key="6">
    <source>
    </source>
</evidence>
<evidence type="ECO:0000303" key="7">
    <source>
    </source>
</evidence>
<evidence type="ECO:0000303" key="8">
    <source>
    </source>
</evidence>
<evidence type="ECO:0000305" key="9">
    <source>
    </source>
</evidence>
<evidence type="ECO:0000305" key="10">
    <source>
    </source>
</evidence>
<evidence type="ECO:0000305" key="11">
    <source>
    </source>
</evidence>
<evidence type="ECO:0000305" key="12">
    <source>
    </source>
</evidence>
<keyword id="KW-0002">3D-structure</keyword>
<keyword id="KW-1003">Cell membrane</keyword>
<keyword id="KW-0186">Copper</keyword>
<keyword id="KW-0963">Cytoplasm</keyword>
<keyword id="KW-0903">Direct protein sequencing</keyword>
<keyword id="KW-0472">Membrane</keyword>
<keyword id="KW-0479">Metal-binding</keyword>
<keyword id="KW-0503">Monooxygenase</keyword>
<keyword id="KW-0560">Oxidoreductase</keyword>
<keyword id="KW-1185">Reference proteome</keyword>
<keyword id="KW-0732">Signal</keyword>
<keyword id="KW-0812">Transmembrane</keyword>
<keyword id="KW-1133">Transmembrane helix</keyword>
<protein>
    <recommendedName>
        <fullName evidence="7">Ammonia monooxygenase beta subunit</fullName>
        <shortName evidence="7">AMO</shortName>
        <ecNumber evidence="4 12">1.14.99.39</ecNumber>
    </recommendedName>
    <alternativeName>
        <fullName evidence="7">Heterotrimeric Cu-heme enzyme</fullName>
    </alternativeName>
</protein>